<keyword id="KW-0025">Alternative splicing</keyword>
<keyword id="KW-0175">Coiled coil</keyword>
<keyword id="KW-0597">Phosphoprotein</keyword>
<keyword id="KW-1267">Proteomics identification</keyword>
<keyword id="KW-1185">Reference proteome</keyword>
<gene>
    <name type="primary">SNX29</name>
    <name type="synonym">RUNDC2A</name>
</gene>
<dbReference type="EMBL" id="AC007216">
    <property type="status" value="NOT_ANNOTATED_CDS"/>
    <property type="molecule type" value="Genomic_DNA"/>
</dbReference>
<dbReference type="EMBL" id="AC007598">
    <property type="status" value="NOT_ANNOTATED_CDS"/>
    <property type="molecule type" value="Genomic_DNA"/>
</dbReference>
<dbReference type="EMBL" id="AC007601">
    <property type="status" value="NOT_ANNOTATED_CDS"/>
    <property type="molecule type" value="Genomic_DNA"/>
</dbReference>
<dbReference type="EMBL" id="AC010333">
    <property type="status" value="NOT_ANNOTATED_CDS"/>
    <property type="molecule type" value="Genomic_DNA"/>
</dbReference>
<dbReference type="EMBL" id="AC092365">
    <property type="status" value="NOT_ANNOTATED_CDS"/>
    <property type="molecule type" value="Genomic_DNA"/>
</dbReference>
<dbReference type="EMBL" id="AC131391">
    <property type="status" value="NOT_ANNOTATED_CDS"/>
    <property type="molecule type" value="Genomic_DNA"/>
</dbReference>
<dbReference type="EMBL" id="AK022425">
    <property type="protein sequence ID" value="BAB14033.1"/>
    <property type="status" value="ALT_SEQ"/>
    <property type="molecule type" value="mRNA"/>
</dbReference>
<dbReference type="EMBL" id="AK074072">
    <property type="protein sequence ID" value="BAB84898.1"/>
    <property type="molecule type" value="mRNA"/>
</dbReference>
<dbReference type="EMBL" id="BC029857">
    <property type="protein sequence ID" value="AAH29857.1"/>
    <property type="molecule type" value="mRNA"/>
</dbReference>
<dbReference type="CCDS" id="CCDS10553.2">
    <molecule id="Q8TEQ0-1"/>
</dbReference>
<dbReference type="RefSeq" id="NP_115543.3">
    <molecule id="Q8TEQ0-1"/>
    <property type="nucleotide sequence ID" value="NM_032167.5"/>
</dbReference>
<dbReference type="RefSeq" id="XP_047290840.1">
    <molecule id="Q8TEQ0-2"/>
    <property type="nucleotide sequence ID" value="XM_047434884.1"/>
</dbReference>
<dbReference type="RefSeq" id="XP_054170323.1">
    <molecule id="Q8TEQ0-2"/>
    <property type="nucleotide sequence ID" value="XM_054314348.1"/>
</dbReference>
<dbReference type="SMR" id="Q8TEQ0"/>
<dbReference type="BioGRID" id="124903">
    <property type="interactions" value="46"/>
</dbReference>
<dbReference type="FunCoup" id="Q8TEQ0">
    <property type="interactions" value="1166"/>
</dbReference>
<dbReference type="IntAct" id="Q8TEQ0">
    <property type="interactions" value="18"/>
</dbReference>
<dbReference type="STRING" id="9606.ENSP00000456480"/>
<dbReference type="TCDB" id="3.A.34.1.1">
    <property type="family name" value="the sorting nexins of the escrt complexes (sn-escrt)"/>
</dbReference>
<dbReference type="GlyCosmos" id="Q8TEQ0">
    <property type="glycosylation" value="1 site, 1 glycan"/>
</dbReference>
<dbReference type="GlyGen" id="Q8TEQ0">
    <property type="glycosylation" value="1 site, 1 O-linked glycan (1 site)"/>
</dbReference>
<dbReference type="iPTMnet" id="Q8TEQ0"/>
<dbReference type="PhosphoSitePlus" id="Q8TEQ0"/>
<dbReference type="BioMuta" id="SNX29"/>
<dbReference type="DMDM" id="353526314"/>
<dbReference type="jPOST" id="Q8TEQ0"/>
<dbReference type="MassIVE" id="Q8TEQ0"/>
<dbReference type="PaxDb" id="9606-ENSP00000456480"/>
<dbReference type="PeptideAtlas" id="Q8TEQ0"/>
<dbReference type="ProteomicsDB" id="74476">
    <molecule id="Q8TEQ0-1"/>
</dbReference>
<dbReference type="ProteomicsDB" id="74477">
    <molecule id="Q8TEQ0-2"/>
</dbReference>
<dbReference type="Pumba" id="Q8TEQ0"/>
<dbReference type="Antibodypedia" id="2225">
    <property type="antibodies" value="121 antibodies from 19 providers"/>
</dbReference>
<dbReference type="DNASU" id="92017"/>
<dbReference type="Ensembl" id="ENST00000566228.6">
    <molecule id="Q8TEQ0-1"/>
    <property type="protein sequence ID" value="ENSP00000456480.1"/>
    <property type="gene ID" value="ENSG00000048471.14"/>
</dbReference>
<dbReference type="GeneID" id="92017"/>
<dbReference type="KEGG" id="hsa:92017"/>
<dbReference type="MANE-Select" id="ENST00000566228.6">
    <property type="protein sequence ID" value="ENSP00000456480.1"/>
    <property type="RefSeq nucleotide sequence ID" value="NM_032167.5"/>
    <property type="RefSeq protein sequence ID" value="NP_115543.3"/>
</dbReference>
<dbReference type="UCSC" id="uc002dby.6">
    <molecule id="Q8TEQ0-1"/>
    <property type="organism name" value="human"/>
</dbReference>
<dbReference type="AGR" id="HGNC:30542"/>
<dbReference type="CTD" id="92017"/>
<dbReference type="DisGeNET" id="92017"/>
<dbReference type="GeneCards" id="SNX29"/>
<dbReference type="HGNC" id="HGNC:30542">
    <property type="gene designation" value="SNX29"/>
</dbReference>
<dbReference type="HPA" id="ENSG00000048471">
    <property type="expression patterns" value="Low tissue specificity"/>
</dbReference>
<dbReference type="neXtProt" id="NX_Q8TEQ0"/>
<dbReference type="OpenTargets" id="ENSG00000048471"/>
<dbReference type="PharmGKB" id="PA162404312"/>
<dbReference type="VEuPathDB" id="HostDB:ENSG00000048471"/>
<dbReference type="eggNOG" id="KOG2101">
    <property type="taxonomic scope" value="Eukaryota"/>
</dbReference>
<dbReference type="eggNOG" id="KOG4381">
    <property type="taxonomic scope" value="Eukaryota"/>
</dbReference>
<dbReference type="GeneTree" id="ENSGT00730000110975"/>
<dbReference type="HOGENOM" id="CLU_020563_1_0_1"/>
<dbReference type="InParanoid" id="Q8TEQ0"/>
<dbReference type="OMA" id="TIPHVKL"/>
<dbReference type="OrthoDB" id="428895at2759"/>
<dbReference type="PAN-GO" id="Q8TEQ0">
    <property type="GO annotations" value="0 GO annotations based on evolutionary models"/>
</dbReference>
<dbReference type="PhylomeDB" id="Q8TEQ0"/>
<dbReference type="PathwayCommons" id="Q8TEQ0"/>
<dbReference type="SignaLink" id="Q8TEQ0"/>
<dbReference type="BioGRID-ORCS" id="92017">
    <property type="hits" value="11 hits in 1153 CRISPR screens"/>
</dbReference>
<dbReference type="ChiTaRS" id="SNX29">
    <property type="organism name" value="human"/>
</dbReference>
<dbReference type="GenomeRNAi" id="92017"/>
<dbReference type="Pharos" id="Q8TEQ0">
    <property type="development level" value="Tbio"/>
</dbReference>
<dbReference type="PRO" id="PR:Q8TEQ0"/>
<dbReference type="Proteomes" id="UP000005640">
    <property type="component" value="Chromosome 16"/>
</dbReference>
<dbReference type="RNAct" id="Q8TEQ0">
    <property type="molecule type" value="protein"/>
</dbReference>
<dbReference type="Bgee" id="ENSG00000048471">
    <property type="expression patterns" value="Expressed in kidney epithelium and 181 other cell types or tissues"/>
</dbReference>
<dbReference type="ExpressionAtlas" id="Q8TEQ0">
    <property type="expression patterns" value="baseline and differential"/>
</dbReference>
<dbReference type="GO" id="GO:0035091">
    <property type="term" value="F:phosphatidylinositol binding"/>
    <property type="evidence" value="ECO:0007669"/>
    <property type="project" value="InterPro"/>
</dbReference>
<dbReference type="CDD" id="cd07277">
    <property type="entry name" value="PX_RUN"/>
    <property type="match status" value="1"/>
</dbReference>
<dbReference type="CDD" id="cd17689">
    <property type="entry name" value="RUN_SNX29"/>
    <property type="match status" value="1"/>
</dbReference>
<dbReference type="Gene3D" id="1.20.58.900">
    <property type="match status" value="1"/>
</dbReference>
<dbReference type="Gene3D" id="3.30.1520.10">
    <property type="entry name" value="Phox-like domain"/>
    <property type="match status" value="1"/>
</dbReference>
<dbReference type="InterPro" id="IPR001683">
    <property type="entry name" value="PX_dom"/>
</dbReference>
<dbReference type="InterPro" id="IPR036871">
    <property type="entry name" value="PX_dom_sf"/>
</dbReference>
<dbReference type="InterPro" id="IPR004012">
    <property type="entry name" value="Run_dom"/>
</dbReference>
<dbReference type="InterPro" id="IPR037213">
    <property type="entry name" value="Run_dom_sf"/>
</dbReference>
<dbReference type="InterPro" id="IPR047329">
    <property type="entry name" value="RUN_SNX29"/>
</dbReference>
<dbReference type="InterPro" id="IPR037916">
    <property type="entry name" value="SNX29_PX"/>
</dbReference>
<dbReference type="PANTHER" id="PTHR47194:SF4">
    <property type="entry name" value="SORTING NEXIN-29"/>
    <property type="match status" value="1"/>
</dbReference>
<dbReference type="PANTHER" id="PTHR47194">
    <property type="entry name" value="SORTING NEXIN-29-RELATED"/>
    <property type="match status" value="1"/>
</dbReference>
<dbReference type="Pfam" id="PF00787">
    <property type="entry name" value="PX"/>
    <property type="match status" value="1"/>
</dbReference>
<dbReference type="Pfam" id="PF02759">
    <property type="entry name" value="RUN"/>
    <property type="match status" value="1"/>
</dbReference>
<dbReference type="SMART" id="SM00312">
    <property type="entry name" value="PX"/>
    <property type="match status" value="1"/>
</dbReference>
<dbReference type="SMART" id="SM00593">
    <property type="entry name" value="RUN"/>
    <property type="match status" value="1"/>
</dbReference>
<dbReference type="SUPFAM" id="SSF64268">
    <property type="entry name" value="PX domain"/>
    <property type="match status" value="1"/>
</dbReference>
<dbReference type="SUPFAM" id="SSF140741">
    <property type="entry name" value="RUN domain-like"/>
    <property type="match status" value="1"/>
</dbReference>
<dbReference type="PROSITE" id="PS50195">
    <property type="entry name" value="PX"/>
    <property type="match status" value="1"/>
</dbReference>
<dbReference type="PROSITE" id="PS50826">
    <property type="entry name" value="RUN"/>
    <property type="match status" value="1"/>
</dbReference>
<protein>
    <recommendedName>
        <fullName>Sorting nexin-29</fullName>
    </recommendedName>
    <alternativeName>
        <fullName>RUN domain-containing protein 2A</fullName>
    </alternativeName>
</protein>
<sequence length="813" mass="91254">MSGSQNNDKRQFLLERLLDAVKQCQIRFGGRKEIASDSDSRVTCLCAQFEAVLQHGLKRSRGLALTAAAIKQAAGFASKTETEPVFWYYVKEVLNKHELQRFYSLRHIASDVGRGRAWLRCALNEHSLERYLHMLLADRCRLSTFYEDWSFVMDEERSSMLPTMAAGLNSILFAINIDNKDLNGQSKFAPTVSDLLKESTQNVTSLLKESTQGVSSLFREITASSAVSILIKPEQETDPLPVVSRNVSADAKCKKERKKKKKVTNIISFDDEEDEQNSGDVFKKTPGAGESSEDNSDRSSVNIMSAFESPFGPNSNGSQSSNSWKIDSLSLNGEFGYQKLDVKSIDDEDVDENEDDVYGNSSGRKHRGHSESPEKPLEGNTCLSQMHSWAPLKVLHNDSDILFPVSGVGSYSPADAPLGSLENGTGPEDHVLPDPGLRYSVEASSPGHGSPLSSLLPSASVPESMTISELRQATVAMMNRKDELEEENRSLRNLLDGEMEHSAALRQEVDTLKRKVAEQEERQGMKVQALARENEVLKVQLKKYVGAVQMLKREGQTAEVPNLWSVDGEVTVAEQKPGEIAEELASSYERKLIEVAEMHGELIEFNERLHRALVAKEALVSQMRQELIDLRGPVPGDLSQTSEDQSLSDFEISNRALINVWIPSVFLRGKAANAFHVYQVYIRIKDDEWNIYRRYTEFRSLHHKLQNKYPQVRAYNFPPKKAIGNKDAKFVEERRKQLQNYLRSVMNKVIQMVPEFAASPKKETLIQLMPFFVDITPPGEPVNSRPKAASRFPKLSRGQPRETRNVEPQSGDL</sequence>
<name>SNX29_HUMAN</name>
<comment type="alternative products">
    <event type="alternative splicing"/>
    <isoform>
        <id>Q8TEQ0-1</id>
        <name>1</name>
        <sequence type="displayed"/>
    </isoform>
    <isoform>
        <id>Q8TEQ0-2</id>
        <name>2</name>
        <sequence type="described" ref="VSP_027281"/>
    </isoform>
</comment>
<comment type="similarity">
    <text evidence="7">Belongs to the sorting nexin family.</text>
</comment>
<comment type="sequence caution" evidence="7">
    <conflict type="miscellaneous discrepancy">
        <sequence resource="EMBL-CDS" id="BAB14033"/>
    </conflict>
    <text>Probable cloning artifact.</text>
</comment>
<organism>
    <name type="scientific">Homo sapiens</name>
    <name type="common">Human</name>
    <dbReference type="NCBI Taxonomy" id="9606"/>
    <lineage>
        <taxon>Eukaryota</taxon>
        <taxon>Metazoa</taxon>
        <taxon>Chordata</taxon>
        <taxon>Craniata</taxon>
        <taxon>Vertebrata</taxon>
        <taxon>Euteleostomi</taxon>
        <taxon>Mammalia</taxon>
        <taxon>Eutheria</taxon>
        <taxon>Euarchontoglires</taxon>
        <taxon>Primates</taxon>
        <taxon>Haplorrhini</taxon>
        <taxon>Catarrhini</taxon>
        <taxon>Hominidae</taxon>
        <taxon>Homo</taxon>
    </lineage>
</organism>
<evidence type="ECO:0000250" key="1">
    <source>
        <dbReference type="UniProtKB" id="Q9D3S3"/>
    </source>
</evidence>
<evidence type="ECO:0000255" key="2"/>
<evidence type="ECO:0000255" key="3">
    <source>
        <dbReference type="PROSITE-ProRule" id="PRU00147"/>
    </source>
</evidence>
<evidence type="ECO:0000255" key="4">
    <source>
        <dbReference type="PROSITE-ProRule" id="PRU00178"/>
    </source>
</evidence>
<evidence type="ECO:0000256" key="5">
    <source>
        <dbReference type="SAM" id="MobiDB-lite"/>
    </source>
</evidence>
<evidence type="ECO:0000303" key="6">
    <source>
    </source>
</evidence>
<evidence type="ECO:0000305" key="7"/>
<evidence type="ECO:0007744" key="8">
    <source>
    </source>
</evidence>
<feature type="chain" id="PRO_0000297565" description="Sorting nexin-29">
    <location>
        <begin position="1"/>
        <end position="813"/>
    </location>
</feature>
<feature type="domain" description="RUN" evidence="4">
    <location>
        <begin position="36"/>
        <end position="180"/>
    </location>
</feature>
<feature type="domain" description="PX" evidence="3">
    <location>
        <begin position="656"/>
        <end position="779"/>
    </location>
</feature>
<feature type="region of interest" description="Disordered" evidence="5">
    <location>
        <begin position="269"/>
        <end position="299"/>
    </location>
</feature>
<feature type="region of interest" description="Disordered" evidence="5">
    <location>
        <begin position="346"/>
        <end position="378"/>
    </location>
</feature>
<feature type="region of interest" description="Disordered" evidence="5">
    <location>
        <begin position="778"/>
        <end position="813"/>
    </location>
</feature>
<feature type="coiled-coil region" evidence="2">
    <location>
        <begin position="466"/>
        <end position="545"/>
    </location>
</feature>
<feature type="compositionally biased region" description="Acidic residues" evidence="5">
    <location>
        <begin position="346"/>
        <end position="357"/>
    </location>
</feature>
<feature type="modified residue" description="Phosphoserine" evidence="8">
    <location>
        <position position="268"/>
    </location>
</feature>
<feature type="modified residue" description="Phosphoserine" evidence="1">
    <location>
        <position position="291"/>
    </location>
</feature>
<feature type="modified residue" description="Phosphoserine" evidence="1">
    <location>
        <position position="292"/>
    </location>
</feature>
<feature type="modified residue" description="Phosphoserine" evidence="8">
    <location>
        <position position="330"/>
    </location>
</feature>
<feature type="modified residue" description="Phosphoserine" evidence="1">
    <location>
        <position position="344"/>
    </location>
</feature>
<feature type="modified residue" description="Phosphoserine" evidence="1">
    <location>
        <position position="445"/>
    </location>
</feature>
<feature type="modified residue" description="Phosphoserine" evidence="1">
    <location>
        <position position="450"/>
    </location>
</feature>
<feature type="modified residue" description="Phosphoserine" evidence="1">
    <location>
        <position position="639"/>
    </location>
</feature>
<feature type="modified residue" description="Phosphothreonine" evidence="1">
    <location>
        <position position="641"/>
    </location>
</feature>
<feature type="modified residue" description="Phosphoserine" evidence="1">
    <location>
        <position position="642"/>
    </location>
</feature>
<feature type="modified residue" description="Phosphoserine" evidence="1">
    <location>
        <position position="646"/>
    </location>
</feature>
<feature type="splice variant" id="VSP_027281" description="In isoform 2." evidence="6">
    <original>ITPPGEPVNSRPKAASRFPKLSRGQPRETRNVEPQSGDL</original>
    <variation>WISLFGNGRDSSREEFSSS</variation>
    <location>
        <begin position="775"/>
        <end position="813"/>
    </location>
</feature>
<feature type="sequence conflict" description="In Ref. 2; BAB14033." evidence="7" ref="2">
    <original>N</original>
    <variation>D</variation>
    <location>
        <position position="183"/>
    </location>
</feature>
<feature type="sequence conflict" description="In Ref. 2; BAB14033." evidence="7" ref="2">
    <original>S</original>
    <variation>G</variation>
    <location>
        <position position="344"/>
    </location>
</feature>
<accession>Q8TEQ0</accession>
<accession>B5MDW2</accession>
<accession>Q8N2X2</accession>
<accession>Q9HA26</accession>
<proteinExistence type="evidence at protein level"/>
<reference key="1">
    <citation type="journal article" date="2004" name="Nature">
        <title>The sequence and analysis of duplication-rich human chromosome 16.</title>
        <authorList>
            <person name="Martin J."/>
            <person name="Han C."/>
            <person name="Gordon L.A."/>
            <person name="Terry A."/>
            <person name="Prabhakar S."/>
            <person name="She X."/>
            <person name="Xie G."/>
            <person name="Hellsten U."/>
            <person name="Chan Y.M."/>
            <person name="Altherr M."/>
            <person name="Couronne O."/>
            <person name="Aerts A."/>
            <person name="Bajorek E."/>
            <person name="Black S."/>
            <person name="Blumer H."/>
            <person name="Branscomb E."/>
            <person name="Brown N.C."/>
            <person name="Bruno W.J."/>
            <person name="Buckingham J.M."/>
            <person name="Callen D.F."/>
            <person name="Campbell C.S."/>
            <person name="Campbell M.L."/>
            <person name="Campbell E.W."/>
            <person name="Caoile C."/>
            <person name="Challacombe J.F."/>
            <person name="Chasteen L.A."/>
            <person name="Chertkov O."/>
            <person name="Chi H.C."/>
            <person name="Christensen M."/>
            <person name="Clark L.M."/>
            <person name="Cohn J.D."/>
            <person name="Denys M."/>
            <person name="Detter J.C."/>
            <person name="Dickson M."/>
            <person name="Dimitrijevic-Bussod M."/>
            <person name="Escobar J."/>
            <person name="Fawcett J.J."/>
            <person name="Flowers D."/>
            <person name="Fotopulos D."/>
            <person name="Glavina T."/>
            <person name="Gomez M."/>
            <person name="Gonzales E."/>
            <person name="Goodstein D."/>
            <person name="Goodwin L.A."/>
            <person name="Grady D.L."/>
            <person name="Grigoriev I."/>
            <person name="Groza M."/>
            <person name="Hammon N."/>
            <person name="Hawkins T."/>
            <person name="Haydu L."/>
            <person name="Hildebrand C.E."/>
            <person name="Huang W."/>
            <person name="Israni S."/>
            <person name="Jett J."/>
            <person name="Jewett P.B."/>
            <person name="Kadner K."/>
            <person name="Kimball H."/>
            <person name="Kobayashi A."/>
            <person name="Krawczyk M.-C."/>
            <person name="Leyba T."/>
            <person name="Longmire J.L."/>
            <person name="Lopez F."/>
            <person name="Lou Y."/>
            <person name="Lowry S."/>
            <person name="Ludeman T."/>
            <person name="Manohar C.F."/>
            <person name="Mark G.A."/>
            <person name="McMurray K.L."/>
            <person name="Meincke L.J."/>
            <person name="Morgan J."/>
            <person name="Moyzis R.K."/>
            <person name="Mundt M.O."/>
            <person name="Munk A.C."/>
            <person name="Nandkeshwar R.D."/>
            <person name="Pitluck S."/>
            <person name="Pollard M."/>
            <person name="Predki P."/>
            <person name="Parson-Quintana B."/>
            <person name="Ramirez L."/>
            <person name="Rash S."/>
            <person name="Retterer J."/>
            <person name="Ricke D.O."/>
            <person name="Robinson D.L."/>
            <person name="Rodriguez A."/>
            <person name="Salamov A."/>
            <person name="Saunders E.H."/>
            <person name="Scott D."/>
            <person name="Shough T."/>
            <person name="Stallings R.L."/>
            <person name="Stalvey M."/>
            <person name="Sutherland R.D."/>
            <person name="Tapia R."/>
            <person name="Tesmer J.G."/>
            <person name="Thayer N."/>
            <person name="Thompson L.S."/>
            <person name="Tice H."/>
            <person name="Torney D.C."/>
            <person name="Tran-Gyamfi M."/>
            <person name="Tsai M."/>
            <person name="Ulanovsky L.E."/>
            <person name="Ustaszewska A."/>
            <person name="Vo N."/>
            <person name="White P.S."/>
            <person name="Williams A.L."/>
            <person name="Wills P.L."/>
            <person name="Wu J.-R."/>
            <person name="Wu K."/>
            <person name="Yang J."/>
            <person name="DeJong P."/>
            <person name="Bruce D."/>
            <person name="Doggett N.A."/>
            <person name="Deaven L."/>
            <person name="Schmutz J."/>
            <person name="Grimwood J."/>
            <person name="Richardson P."/>
            <person name="Rokhsar D.S."/>
            <person name="Eichler E.E."/>
            <person name="Gilna P."/>
            <person name="Lucas S.M."/>
            <person name="Myers R.M."/>
            <person name="Rubin E.M."/>
            <person name="Pennacchio L.A."/>
        </authorList>
    </citation>
    <scope>NUCLEOTIDE SEQUENCE [LARGE SCALE GENOMIC DNA]</scope>
</reference>
<reference key="2">
    <citation type="journal article" date="2004" name="Nat. Genet.">
        <title>Complete sequencing and characterization of 21,243 full-length human cDNAs.</title>
        <authorList>
            <person name="Ota T."/>
            <person name="Suzuki Y."/>
            <person name="Nishikawa T."/>
            <person name="Otsuki T."/>
            <person name="Sugiyama T."/>
            <person name="Irie R."/>
            <person name="Wakamatsu A."/>
            <person name="Hayashi K."/>
            <person name="Sato H."/>
            <person name="Nagai K."/>
            <person name="Kimura K."/>
            <person name="Makita H."/>
            <person name="Sekine M."/>
            <person name="Obayashi M."/>
            <person name="Nishi T."/>
            <person name="Shibahara T."/>
            <person name="Tanaka T."/>
            <person name="Ishii S."/>
            <person name="Yamamoto J."/>
            <person name="Saito K."/>
            <person name="Kawai Y."/>
            <person name="Isono Y."/>
            <person name="Nakamura Y."/>
            <person name="Nagahari K."/>
            <person name="Murakami K."/>
            <person name="Yasuda T."/>
            <person name="Iwayanagi T."/>
            <person name="Wagatsuma M."/>
            <person name="Shiratori A."/>
            <person name="Sudo H."/>
            <person name="Hosoiri T."/>
            <person name="Kaku Y."/>
            <person name="Kodaira H."/>
            <person name="Kondo H."/>
            <person name="Sugawara M."/>
            <person name="Takahashi M."/>
            <person name="Kanda K."/>
            <person name="Yokoi T."/>
            <person name="Furuya T."/>
            <person name="Kikkawa E."/>
            <person name="Omura Y."/>
            <person name="Abe K."/>
            <person name="Kamihara K."/>
            <person name="Katsuta N."/>
            <person name="Sato K."/>
            <person name="Tanikawa M."/>
            <person name="Yamazaki M."/>
            <person name="Ninomiya K."/>
            <person name="Ishibashi T."/>
            <person name="Yamashita H."/>
            <person name="Murakawa K."/>
            <person name="Fujimori K."/>
            <person name="Tanai H."/>
            <person name="Kimata M."/>
            <person name="Watanabe M."/>
            <person name="Hiraoka S."/>
            <person name="Chiba Y."/>
            <person name="Ishida S."/>
            <person name="Ono Y."/>
            <person name="Takiguchi S."/>
            <person name="Watanabe S."/>
            <person name="Yosida M."/>
            <person name="Hotuta T."/>
            <person name="Kusano J."/>
            <person name="Kanehori K."/>
            <person name="Takahashi-Fujii A."/>
            <person name="Hara H."/>
            <person name="Tanase T.-O."/>
            <person name="Nomura Y."/>
            <person name="Togiya S."/>
            <person name="Komai F."/>
            <person name="Hara R."/>
            <person name="Takeuchi K."/>
            <person name="Arita M."/>
            <person name="Imose N."/>
            <person name="Musashino K."/>
            <person name="Yuuki H."/>
            <person name="Oshima A."/>
            <person name="Sasaki N."/>
            <person name="Aotsuka S."/>
            <person name="Yoshikawa Y."/>
            <person name="Matsunawa H."/>
            <person name="Ichihara T."/>
            <person name="Shiohata N."/>
            <person name="Sano S."/>
            <person name="Moriya S."/>
            <person name="Momiyama H."/>
            <person name="Satoh N."/>
            <person name="Takami S."/>
            <person name="Terashima Y."/>
            <person name="Suzuki O."/>
            <person name="Nakagawa S."/>
            <person name="Senoh A."/>
            <person name="Mizoguchi H."/>
            <person name="Goto Y."/>
            <person name="Shimizu F."/>
            <person name="Wakebe H."/>
            <person name="Hishigaki H."/>
            <person name="Watanabe T."/>
            <person name="Sugiyama A."/>
            <person name="Takemoto M."/>
            <person name="Kawakami B."/>
            <person name="Yamazaki M."/>
            <person name="Watanabe K."/>
            <person name="Kumagai A."/>
            <person name="Itakura S."/>
            <person name="Fukuzumi Y."/>
            <person name="Fujimori Y."/>
            <person name="Komiyama M."/>
            <person name="Tashiro H."/>
            <person name="Tanigami A."/>
            <person name="Fujiwara T."/>
            <person name="Ono T."/>
            <person name="Yamada K."/>
            <person name="Fujii Y."/>
            <person name="Ozaki K."/>
            <person name="Hirao M."/>
            <person name="Ohmori Y."/>
            <person name="Kawabata A."/>
            <person name="Hikiji T."/>
            <person name="Kobatake N."/>
            <person name="Inagaki H."/>
            <person name="Ikema Y."/>
            <person name="Okamoto S."/>
            <person name="Okitani R."/>
            <person name="Kawakami T."/>
            <person name="Noguchi S."/>
            <person name="Itoh T."/>
            <person name="Shigeta K."/>
            <person name="Senba T."/>
            <person name="Matsumura K."/>
            <person name="Nakajima Y."/>
            <person name="Mizuno T."/>
            <person name="Morinaga M."/>
            <person name="Sasaki M."/>
            <person name="Togashi T."/>
            <person name="Oyama M."/>
            <person name="Hata H."/>
            <person name="Watanabe M."/>
            <person name="Komatsu T."/>
            <person name="Mizushima-Sugano J."/>
            <person name="Satoh T."/>
            <person name="Shirai Y."/>
            <person name="Takahashi Y."/>
            <person name="Nakagawa K."/>
            <person name="Okumura K."/>
            <person name="Nagase T."/>
            <person name="Nomura N."/>
            <person name="Kikuchi H."/>
            <person name="Masuho Y."/>
            <person name="Yamashita R."/>
            <person name="Nakai K."/>
            <person name="Yada T."/>
            <person name="Nakamura Y."/>
            <person name="Ohara O."/>
            <person name="Isogai T."/>
            <person name="Sugano S."/>
        </authorList>
    </citation>
    <scope>NUCLEOTIDE SEQUENCE [LARGE SCALE MRNA] OF 1-375 (ISOFORM 1)</scope>
    <source>
        <tissue>Mammary gland</tissue>
    </source>
</reference>
<reference key="3">
    <citation type="journal article" date="2003" name="DNA Res.">
        <title>Characterization of long cDNA clones from human adult spleen. II. The complete sequences of 81 cDNA clones.</title>
        <authorList>
            <person name="Jikuya H."/>
            <person name="Takano J."/>
            <person name="Kikuno R."/>
            <person name="Hirosawa M."/>
            <person name="Nagase T."/>
            <person name="Nomura N."/>
            <person name="Ohara O."/>
        </authorList>
    </citation>
    <scope>NUCLEOTIDE SEQUENCE [LARGE SCALE MRNA] OF 441-813 (ISOFORM 1)</scope>
    <source>
        <tissue>Spleen</tissue>
    </source>
</reference>
<reference key="4">
    <citation type="journal article" date="2004" name="Genome Res.">
        <title>The status, quality, and expansion of the NIH full-length cDNA project: the Mammalian Gene Collection (MGC).</title>
        <authorList>
            <consortium name="The MGC Project Team"/>
        </authorList>
    </citation>
    <scope>NUCLEOTIDE SEQUENCE [LARGE SCALE MRNA] OF 512-813 (ISOFORM 2)</scope>
    <source>
        <tissue>Brain</tissue>
    </source>
</reference>
<reference key="5">
    <citation type="journal article" date="2006" name="Cell">
        <title>Global, in vivo, and site-specific phosphorylation dynamics in signaling networks.</title>
        <authorList>
            <person name="Olsen J.V."/>
            <person name="Blagoev B."/>
            <person name="Gnad F."/>
            <person name="Macek B."/>
            <person name="Kumar C."/>
            <person name="Mortensen P."/>
            <person name="Mann M."/>
        </authorList>
    </citation>
    <scope>IDENTIFICATION BY MASS SPECTROMETRY [LARGE SCALE ANALYSIS]</scope>
    <source>
        <tissue>Cervix carcinoma</tissue>
    </source>
</reference>
<reference key="6">
    <citation type="journal article" date="2008" name="Proc. Natl. Acad. Sci. U.S.A.">
        <title>A quantitative atlas of mitotic phosphorylation.</title>
        <authorList>
            <person name="Dephoure N."/>
            <person name="Zhou C."/>
            <person name="Villen J."/>
            <person name="Beausoleil S.A."/>
            <person name="Bakalarski C.E."/>
            <person name="Elledge S.J."/>
            <person name="Gygi S.P."/>
        </authorList>
    </citation>
    <scope>IDENTIFICATION BY MASS SPECTROMETRY [LARGE SCALE ANALYSIS]</scope>
    <source>
        <tissue>Cervix carcinoma</tissue>
    </source>
</reference>
<reference key="7">
    <citation type="journal article" date="2009" name="Sci. Signal.">
        <title>Quantitative phosphoproteomic analysis of T cell receptor signaling reveals system-wide modulation of protein-protein interactions.</title>
        <authorList>
            <person name="Mayya V."/>
            <person name="Lundgren D.H."/>
            <person name="Hwang S.-I."/>
            <person name="Rezaul K."/>
            <person name="Wu L."/>
            <person name="Eng J.K."/>
            <person name="Rodionov V."/>
            <person name="Han D.K."/>
        </authorList>
    </citation>
    <scope>IDENTIFICATION BY MASS SPECTROMETRY [LARGE SCALE ANALYSIS]</scope>
    <source>
        <tissue>Leukemic T-cell</tissue>
    </source>
</reference>
<reference key="8">
    <citation type="journal article" date="2010" name="Sci. Signal.">
        <title>Quantitative phosphoproteomics reveals widespread full phosphorylation site occupancy during mitosis.</title>
        <authorList>
            <person name="Olsen J.V."/>
            <person name="Vermeulen M."/>
            <person name="Santamaria A."/>
            <person name="Kumar C."/>
            <person name="Miller M.L."/>
            <person name="Jensen L.J."/>
            <person name="Gnad F."/>
            <person name="Cox J."/>
            <person name="Jensen T.S."/>
            <person name="Nigg E.A."/>
            <person name="Brunak S."/>
            <person name="Mann M."/>
        </authorList>
    </citation>
    <scope>IDENTIFICATION BY MASS SPECTROMETRY [LARGE SCALE ANALYSIS]</scope>
    <source>
        <tissue>Cervix carcinoma</tissue>
    </source>
</reference>
<reference key="9">
    <citation type="journal article" date="2013" name="J. Proteome Res.">
        <title>Toward a comprehensive characterization of a human cancer cell phosphoproteome.</title>
        <authorList>
            <person name="Zhou H."/>
            <person name="Di Palma S."/>
            <person name="Preisinger C."/>
            <person name="Peng M."/>
            <person name="Polat A.N."/>
            <person name="Heck A.J."/>
            <person name="Mohammed S."/>
        </authorList>
    </citation>
    <scope>PHOSPHORYLATION [LARGE SCALE ANALYSIS] AT SER-268 AND SER-330</scope>
    <scope>IDENTIFICATION BY MASS SPECTROMETRY [LARGE SCALE ANALYSIS]</scope>
    <source>
        <tissue>Cervix carcinoma</tissue>
        <tissue>Erythroleukemia</tissue>
    </source>
</reference>